<keyword id="KW-0012">Acyltransferase</keyword>
<keyword id="KW-0663">Pyridoxal phosphate</keyword>
<keyword id="KW-1185">Reference proteome</keyword>
<keyword id="KW-0808">Transferase</keyword>
<gene>
    <name type="primary">bioF2</name>
    <name type="ordered locus">MT0037</name>
</gene>
<comment type="function">
    <text evidence="1">Catalyzes the decarboxylative condensation of pimeloyl-[acyl-carrier protein] and L-alanine to produce 8-amino-7-oxononanoate (AON), [acyl-carrier protein], and carbon dioxide.</text>
</comment>
<comment type="catalytic activity">
    <reaction>
        <text>6-carboxyhexanoyl-[ACP] + L-alanine + H(+) = (8S)-8-amino-7-oxononanoate + holo-[ACP] + CO2</text>
        <dbReference type="Rhea" id="RHEA:42288"/>
        <dbReference type="Rhea" id="RHEA-COMP:9685"/>
        <dbReference type="Rhea" id="RHEA-COMP:9955"/>
        <dbReference type="ChEBI" id="CHEBI:15378"/>
        <dbReference type="ChEBI" id="CHEBI:16526"/>
        <dbReference type="ChEBI" id="CHEBI:57972"/>
        <dbReference type="ChEBI" id="CHEBI:64479"/>
        <dbReference type="ChEBI" id="CHEBI:78846"/>
        <dbReference type="ChEBI" id="CHEBI:149468"/>
        <dbReference type="EC" id="2.3.1.47"/>
    </reaction>
</comment>
<comment type="cofactor">
    <cofactor evidence="1">
        <name>pyridoxal 5'-phosphate</name>
        <dbReference type="ChEBI" id="CHEBI:597326"/>
    </cofactor>
</comment>
<comment type="similarity">
    <text evidence="2">In the C-terminal section; belongs to the class-II pyridoxal-phosphate-dependent aminotransferase family. BioF subfamily.</text>
</comment>
<proteinExistence type="inferred from homology"/>
<organism>
    <name type="scientific">Mycobacterium tuberculosis (strain CDC 1551 / Oshkosh)</name>
    <dbReference type="NCBI Taxonomy" id="83331"/>
    <lineage>
        <taxon>Bacteria</taxon>
        <taxon>Bacillati</taxon>
        <taxon>Actinomycetota</taxon>
        <taxon>Actinomycetes</taxon>
        <taxon>Mycobacteriales</taxon>
        <taxon>Mycobacteriaceae</taxon>
        <taxon>Mycobacterium</taxon>
        <taxon>Mycobacterium tuberculosis complex</taxon>
    </lineage>
</organism>
<evidence type="ECO:0000250" key="1"/>
<evidence type="ECO:0000305" key="2"/>
<protein>
    <recommendedName>
        <fullName>Putative 8-amino-7-oxononanoate synthase 2</fullName>
        <shortName>AONS</shortName>
        <ecNumber>2.3.1.47</ecNumber>
    </recommendedName>
    <alternativeName>
        <fullName>7-keto-8-amino-pelargonic acid synthase</fullName>
        <shortName>7-KAP synthase</shortName>
        <shortName>KAPA synthase</shortName>
    </alternativeName>
    <alternativeName>
        <fullName>8-amino-7-ketopelargonate synthase</fullName>
    </alternativeName>
</protein>
<name>BIOF2_MYCTO</name>
<feature type="chain" id="PRO_0000426820" description="Putative 8-amino-7-oxononanoate synthase 2">
    <location>
        <begin position="1"/>
        <end position="771"/>
    </location>
</feature>
<feature type="region of interest" description="Unknown">
    <location>
        <begin position="1"/>
        <end position="418"/>
    </location>
</feature>
<feature type="region of interest" description="KAPA synthase">
    <location>
        <begin position="419"/>
        <end position="771"/>
    </location>
</feature>
<feature type="binding site" evidence="1">
    <location>
        <position position="407"/>
    </location>
    <ligand>
        <name>substrate</name>
    </ligand>
</feature>
<feature type="binding site" evidence="1">
    <location>
        <begin position="485"/>
        <end position="486"/>
    </location>
    <ligand>
        <name>pyridoxal 5'-phosphate</name>
        <dbReference type="ChEBI" id="CHEBI:597326"/>
    </ligand>
</feature>
<feature type="binding site" evidence="1">
    <location>
        <position position="510"/>
    </location>
    <ligand>
        <name>substrate</name>
    </ligand>
</feature>
<feature type="binding site" evidence="1">
    <location>
        <position position="556"/>
    </location>
    <ligand>
        <name>pyridoxal 5'-phosphate</name>
        <dbReference type="ChEBI" id="CHEBI:597326"/>
    </ligand>
</feature>
<feature type="binding site" evidence="1">
    <location>
        <begin position="581"/>
        <end position="584"/>
    </location>
    <ligand>
        <name>pyridoxal 5'-phosphate</name>
        <dbReference type="ChEBI" id="CHEBI:597326"/>
    </ligand>
</feature>
<feature type="modified residue" description="N6-(pyridoxal phosphate)lysine" evidence="1">
    <location>
        <position position="615"/>
    </location>
</feature>
<reference key="1">
    <citation type="journal article" date="2002" name="J. Bacteriol.">
        <title>Whole-genome comparison of Mycobacterium tuberculosis clinical and laboratory strains.</title>
        <authorList>
            <person name="Fleischmann R.D."/>
            <person name="Alland D."/>
            <person name="Eisen J.A."/>
            <person name="Carpenter L."/>
            <person name="White O."/>
            <person name="Peterson J.D."/>
            <person name="DeBoy R.T."/>
            <person name="Dodson R.J."/>
            <person name="Gwinn M.L."/>
            <person name="Haft D.H."/>
            <person name="Hickey E.K."/>
            <person name="Kolonay J.F."/>
            <person name="Nelson W.C."/>
            <person name="Umayam L.A."/>
            <person name="Ermolaeva M.D."/>
            <person name="Salzberg S.L."/>
            <person name="Delcher A."/>
            <person name="Utterback T.R."/>
            <person name="Weidman J.F."/>
            <person name="Khouri H.M."/>
            <person name="Gill J."/>
            <person name="Mikula A."/>
            <person name="Bishai W."/>
            <person name="Jacobs W.R. Jr."/>
            <person name="Venter J.C."/>
            <person name="Fraser C.M."/>
        </authorList>
    </citation>
    <scope>NUCLEOTIDE SEQUENCE [LARGE SCALE GENOMIC DNA]</scope>
    <source>
        <strain>CDC 1551 / Oshkosh</strain>
    </source>
</reference>
<accession>P9WQ84</accession>
<accession>L0T270</accession>
<accession>P71602</accession>
<accession>Q7DAK0</accession>
<dbReference type="EC" id="2.3.1.47"/>
<dbReference type="EMBL" id="AE000516">
    <property type="protein sequence ID" value="AAK44260.1"/>
    <property type="molecule type" value="Genomic_DNA"/>
</dbReference>
<dbReference type="PIR" id="F70701">
    <property type="entry name" value="F70701"/>
</dbReference>
<dbReference type="RefSeq" id="WP_003905217.1">
    <property type="nucleotide sequence ID" value="NZ_KK341227.1"/>
</dbReference>
<dbReference type="SMR" id="P9WQ84"/>
<dbReference type="KEGG" id="mtc:MT0037"/>
<dbReference type="PATRIC" id="fig|83331.31.peg.37"/>
<dbReference type="HOGENOM" id="CLU_024741_1_0_11"/>
<dbReference type="Proteomes" id="UP000001020">
    <property type="component" value="Chromosome"/>
</dbReference>
<dbReference type="GO" id="GO:0008710">
    <property type="term" value="F:8-amino-7-oxononanoate synthase activity"/>
    <property type="evidence" value="ECO:0007669"/>
    <property type="project" value="UniProtKB-EC"/>
</dbReference>
<dbReference type="GO" id="GO:0030170">
    <property type="term" value="F:pyridoxal phosphate binding"/>
    <property type="evidence" value="ECO:0007669"/>
    <property type="project" value="InterPro"/>
</dbReference>
<dbReference type="GO" id="GO:0009058">
    <property type="term" value="P:biosynthetic process"/>
    <property type="evidence" value="ECO:0007669"/>
    <property type="project" value="InterPro"/>
</dbReference>
<dbReference type="FunFam" id="3.40.630.30:FF:000197">
    <property type="entry name" value="Possible 8-amino-7-oxononanoate synthase bioF2"/>
    <property type="match status" value="1"/>
</dbReference>
<dbReference type="FunFam" id="3.40.640.10:FF:000173">
    <property type="entry name" value="Possible 8-amino-7-oxononanoate synthase bioF2"/>
    <property type="match status" value="1"/>
</dbReference>
<dbReference type="Gene3D" id="3.40.630.30">
    <property type="match status" value="1"/>
</dbReference>
<dbReference type="Gene3D" id="3.90.1150.10">
    <property type="entry name" value="Aspartate Aminotransferase, domain 1"/>
    <property type="match status" value="1"/>
</dbReference>
<dbReference type="Gene3D" id="3.40.640.10">
    <property type="entry name" value="Type I PLP-dependent aspartate aminotransferase-like (Major domain)"/>
    <property type="match status" value="1"/>
</dbReference>
<dbReference type="InterPro" id="IPR016181">
    <property type="entry name" value="Acyl_CoA_acyltransferase"/>
</dbReference>
<dbReference type="InterPro" id="IPR001917">
    <property type="entry name" value="Aminotrans_II_pyridoxalP_BS"/>
</dbReference>
<dbReference type="InterPro" id="IPR004839">
    <property type="entry name" value="Aminotransferase_I/II_large"/>
</dbReference>
<dbReference type="InterPro" id="IPR050087">
    <property type="entry name" value="AON_synthase_class-II"/>
</dbReference>
<dbReference type="InterPro" id="IPR038740">
    <property type="entry name" value="BioF2-like_GNAT_dom"/>
</dbReference>
<dbReference type="InterPro" id="IPR015424">
    <property type="entry name" value="PyrdxlP-dep_Trfase"/>
</dbReference>
<dbReference type="InterPro" id="IPR015421">
    <property type="entry name" value="PyrdxlP-dep_Trfase_major"/>
</dbReference>
<dbReference type="InterPro" id="IPR015422">
    <property type="entry name" value="PyrdxlP-dep_Trfase_small"/>
</dbReference>
<dbReference type="PANTHER" id="PTHR13693">
    <property type="entry name" value="CLASS II AMINOTRANSFERASE/8-AMINO-7-OXONONANOATE SYNTHASE"/>
    <property type="match status" value="1"/>
</dbReference>
<dbReference type="PANTHER" id="PTHR13693:SF3">
    <property type="entry name" value="LD36009P"/>
    <property type="match status" value="1"/>
</dbReference>
<dbReference type="Pfam" id="PF13480">
    <property type="entry name" value="Acetyltransf_6"/>
    <property type="match status" value="1"/>
</dbReference>
<dbReference type="Pfam" id="PF00155">
    <property type="entry name" value="Aminotran_1_2"/>
    <property type="match status" value="1"/>
</dbReference>
<dbReference type="SUPFAM" id="SSF55729">
    <property type="entry name" value="Acyl-CoA N-acyltransferases (Nat)"/>
    <property type="match status" value="1"/>
</dbReference>
<dbReference type="SUPFAM" id="SSF53383">
    <property type="entry name" value="PLP-dependent transferases"/>
    <property type="match status" value="1"/>
</dbReference>
<dbReference type="PROSITE" id="PS00599">
    <property type="entry name" value="AA_TRANSFER_CLASS_2"/>
    <property type="match status" value="1"/>
</dbReference>
<sequence>MPTGLGYDFLRPVEDSGINDLKHYYFMADLADGQPLGRANLYSVCFDLATTDRKLTPAWRTTIKRWFPGFMTFRFLECGLLTMVSNPLALRSDTDLERVLPVLAGQMDQLAHDDGSDFLMIRDVDPEHYQRYLDILRPLGFRPALGFSRVDTTISWSSVEEALGCLSHKRRLPLKTSLEFRERFGIEVEELDEYAEHAPVLARLWRNVKTEAKDYQREDLNPEFFAACSRHLHGRSRLWLFRYQGTPIAFFLNVWGADENYILLEWGIDRDFEHYRKANLYRAALMLSLKDAISRDKRRMEMGITNYFTKLRIPGARVIPTIYFLRHSTDPVHTATLARMMMHNIQRPTLPDDMSEEFCRWEERIRLDQDGLPEHDIFRKIDRQHKYTGLKLGGVYGFYPRFTGPQRSTVKAAELGEIVLLGTNSYLGLATHPEVVEASAEATRRYGTGCSGSPLLNGTLDLHVSLEQELACFLGKPAAVLCSTGYQSNLAAISALCESGDMIIQDALNHRSLFDAARLSGADFTLYRHNDMDHLARVLRRTEGRRRIIVVDAVFSMEGTVADLATIAELADRHGCRVYVDESHALGVLGPDGRGASAALGVLARMDVVMGTFSKSFASVGGFIAGDRPVVDYIRHNGSGHVFSASLPPAAAAATHAALRVSRREPDRRARVLAAAEYMATGLARQGYQAEYHGTAIVPVILGNPTVAHAGYLRLMRSGVYVNPVAPPAVPEERSGFRTSYLADHRQSDLDRALHVFAGLAEDLTPQGAAL</sequence>